<organism>
    <name type="scientific">Mycolicibacterium paratuberculosis (strain ATCC BAA-968 / K-10)</name>
    <name type="common">Mycobacterium paratuberculosis</name>
    <dbReference type="NCBI Taxonomy" id="262316"/>
    <lineage>
        <taxon>Bacteria</taxon>
        <taxon>Bacillati</taxon>
        <taxon>Actinomycetota</taxon>
        <taxon>Actinomycetes</taxon>
        <taxon>Mycobacteriales</taxon>
        <taxon>Mycobacteriaceae</taxon>
        <taxon>Mycobacterium</taxon>
        <taxon>Mycobacterium avium complex (MAC)</taxon>
    </lineage>
</organism>
<protein>
    <recommendedName>
        <fullName evidence="1">Cell division protein SepF</fullName>
    </recommendedName>
</protein>
<accession>Q73YR4</accession>
<keyword id="KW-0131">Cell cycle</keyword>
<keyword id="KW-0132">Cell division</keyword>
<keyword id="KW-0963">Cytoplasm</keyword>
<keyword id="KW-1185">Reference proteome</keyword>
<keyword id="KW-0717">Septation</keyword>
<reference key="1">
    <citation type="journal article" date="2005" name="Proc. Natl. Acad. Sci. U.S.A.">
        <title>The complete genome sequence of Mycobacterium avium subspecies paratuberculosis.</title>
        <authorList>
            <person name="Li L."/>
            <person name="Bannantine J.P."/>
            <person name="Zhang Q."/>
            <person name="Amonsin A."/>
            <person name="May B.J."/>
            <person name="Alt D."/>
            <person name="Banerji N."/>
            <person name="Kanjilal S."/>
            <person name="Kapur V."/>
        </authorList>
    </citation>
    <scope>NUCLEOTIDE SEQUENCE [LARGE SCALE GENOMIC DNA]</scope>
    <source>
        <strain>ATCC BAA-968 / K-10</strain>
    </source>
</reference>
<sequence length="214" mass="24440">MSTLHKVKAYFGMAPMDDYEDEYYDDRAPSRGFPRPRFDDGYGRYDGDDYDDPRREPADCPPPAGYRGGYAEESRYGAVHPREFERPEMGRPRFGSWLRNSTRGALAMDPRRMAMMFEEGHPLSKITTLRPKDYSEARTIGERFRDGTPVIMDLVSMDNADAKRLVDFAAGLAFALRGSFDKVATKVFLLSPADVDVSPEERRRIAETGFYAYQ</sequence>
<comment type="function">
    <text evidence="1">Cell division protein that is part of the divisome complex and is recruited early to the Z-ring. Probably stimulates Z-ring formation, perhaps through the cross-linking of FtsZ protofilaments. Its function overlaps with FtsA.</text>
</comment>
<comment type="subunit">
    <text evidence="1">Homodimer. Interacts with FtsZ.</text>
</comment>
<comment type="subcellular location">
    <subcellularLocation>
        <location evidence="1">Cytoplasm</location>
    </subcellularLocation>
    <text evidence="1">Localizes to the division site, in a FtsZ-dependent manner.</text>
</comment>
<comment type="similarity">
    <text evidence="1">Belongs to the SepF family.</text>
</comment>
<dbReference type="EMBL" id="AE016958">
    <property type="protein sequence ID" value="AAS04208.1"/>
    <property type="molecule type" value="Genomic_DNA"/>
</dbReference>
<dbReference type="RefSeq" id="WP_003878111.1">
    <property type="nucleotide sequence ID" value="NZ_CP106873.1"/>
</dbReference>
<dbReference type="SMR" id="Q73YR4"/>
<dbReference type="STRING" id="262316.MAP_1891c"/>
<dbReference type="KEGG" id="mpa:MAP_1891c"/>
<dbReference type="PATRIC" id="fig|262316.17.peg.2004"/>
<dbReference type="eggNOG" id="COG1799">
    <property type="taxonomic scope" value="Bacteria"/>
</dbReference>
<dbReference type="HOGENOM" id="CLU_078499_0_0_11"/>
<dbReference type="Proteomes" id="UP000000580">
    <property type="component" value="Chromosome"/>
</dbReference>
<dbReference type="GO" id="GO:0005737">
    <property type="term" value="C:cytoplasm"/>
    <property type="evidence" value="ECO:0007669"/>
    <property type="project" value="UniProtKB-SubCell"/>
</dbReference>
<dbReference type="GO" id="GO:0000917">
    <property type="term" value="P:division septum assembly"/>
    <property type="evidence" value="ECO:0007669"/>
    <property type="project" value="UniProtKB-KW"/>
</dbReference>
<dbReference type="GO" id="GO:0043093">
    <property type="term" value="P:FtsZ-dependent cytokinesis"/>
    <property type="evidence" value="ECO:0007669"/>
    <property type="project" value="UniProtKB-UniRule"/>
</dbReference>
<dbReference type="FunFam" id="3.30.110.150:FF:000001">
    <property type="entry name" value="Cell division protein SepF"/>
    <property type="match status" value="1"/>
</dbReference>
<dbReference type="Gene3D" id="3.30.110.150">
    <property type="entry name" value="SepF-like protein"/>
    <property type="match status" value="1"/>
</dbReference>
<dbReference type="HAMAP" id="MF_01197">
    <property type="entry name" value="SepF"/>
    <property type="match status" value="1"/>
</dbReference>
<dbReference type="InterPro" id="IPR023052">
    <property type="entry name" value="Cell_div_SepF"/>
</dbReference>
<dbReference type="InterPro" id="IPR007561">
    <property type="entry name" value="Cell_div_SepF/SepF-rel"/>
</dbReference>
<dbReference type="InterPro" id="IPR038594">
    <property type="entry name" value="SepF-like_sf"/>
</dbReference>
<dbReference type="PANTHER" id="PTHR35798">
    <property type="entry name" value="CELL DIVISION PROTEIN SEPF"/>
    <property type="match status" value="1"/>
</dbReference>
<dbReference type="PANTHER" id="PTHR35798:SF1">
    <property type="entry name" value="CELL DIVISION PROTEIN SEPF"/>
    <property type="match status" value="1"/>
</dbReference>
<dbReference type="Pfam" id="PF04472">
    <property type="entry name" value="SepF"/>
    <property type="match status" value="1"/>
</dbReference>
<name>SEPF_MYCPA</name>
<feature type="chain" id="PRO_0000334042" description="Cell division protein SepF">
    <location>
        <begin position="1"/>
        <end position="214"/>
    </location>
</feature>
<feature type="region of interest" description="Disordered" evidence="2">
    <location>
        <begin position="23"/>
        <end position="70"/>
    </location>
</feature>
<feature type="compositionally biased region" description="Basic and acidic residues" evidence="2">
    <location>
        <begin position="36"/>
        <end position="58"/>
    </location>
</feature>
<proteinExistence type="inferred from homology"/>
<gene>
    <name evidence="1" type="primary">sepF</name>
    <name type="ordered locus">MAP_1891c</name>
</gene>
<evidence type="ECO:0000255" key="1">
    <source>
        <dbReference type="HAMAP-Rule" id="MF_01197"/>
    </source>
</evidence>
<evidence type="ECO:0000256" key="2">
    <source>
        <dbReference type="SAM" id="MobiDB-lite"/>
    </source>
</evidence>